<proteinExistence type="inferred from homology"/>
<sequence length="83" mass="8469">METVLGMTAIAVALLIGMGALGTAIGFGLLGGKFLEGAARQPEMAPMLQVKMFIVAGLLDAVTMIGVGIALFMLFTNPLGAML</sequence>
<protein>
    <recommendedName>
        <fullName evidence="1">ATP synthase subunit c</fullName>
    </recommendedName>
    <alternativeName>
        <fullName evidence="1">ATP synthase F(0) sector subunit c</fullName>
    </alternativeName>
    <alternativeName>
        <fullName evidence="1">F-type ATPase subunit c</fullName>
        <shortName evidence="1">F-ATPase subunit c</shortName>
    </alternativeName>
    <alternativeName>
        <fullName evidence="1">Lipid-binding protein</fullName>
    </alternativeName>
</protein>
<organism>
    <name type="scientific">Shewanella piezotolerans (strain WP3 / JCM 13877)</name>
    <dbReference type="NCBI Taxonomy" id="225849"/>
    <lineage>
        <taxon>Bacteria</taxon>
        <taxon>Pseudomonadati</taxon>
        <taxon>Pseudomonadota</taxon>
        <taxon>Gammaproteobacteria</taxon>
        <taxon>Alteromonadales</taxon>
        <taxon>Shewanellaceae</taxon>
        <taxon>Shewanella</taxon>
    </lineage>
</organism>
<reference key="1">
    <citation type="journal article" date="2008" name="PLoS ONE">
        <title>Environmental adaptation: genomic analysis of the piezotolerant and psychrotolerant deep-sea iron reducing bacterium Shewanella piezotolerans WP3.</title>
        <authorList>
            <person name="Wang F."/>
            <person name="Wang J."/>
            <person name="Jian H."/>
            <person name="Zhang B."/>
            <person name="Li S."/>
            <person name="Wang F."/>
            <person name="Zeng X."/>
            <person name="Gao L."/>
            <person name="Bartlett D.H."/>
            <person name="Yu J."/>
            <person name="Hu S."/>
            <person name="Xiao X."/>
        </authorList>
    </citation>
    <scope>NUCLEOTIDE SEQUENCE [LARGE SCALE GENOMIC DNA]</scope>
    <source>
        <strain>WP3 / JCM 13877</strain>
    </source>
</reference>
<gene>
    <name evidence="1" type="primary">atpE</name>
    <name type="ordered locus">swp_5161</name>
</gene>
<name>ATPL_SHEPW</name>
<feature type="chain" id="PRO_1000184478" description="ATP synthase subunit c">
    <location>
        <begin position="1"/>
        <end position="83"/>
    </location>
</feature>
<feature type="transmembrane region" description="Helical" evidence="1">
    <location>
        <begin position="10"/>
        <end position="30"/>
    </location>
</feature>
<feature type="transmembrane region" description="Helical" evidence="1">
    <location>
        <begin position="52"/>
        <end position="72"/>
    </location>
</feature>
<feature type="site" description="Reversibly protonated during proton transport" evidence="1">
    <location>
        <position position="60"/>
    </location>
</feature>
<keyword id="KW-0066">ATP synthesis</keyword>
<keyword id="KW-0997">Cell inner membrane</keyword>
<keyword id="KW-1003">Cell membrane</keyword>
<keyword id="KW-0138">CF(0)</keyword>
<keyword id="KW-0375">Hydrogen ion transport</keyword>
<keyword id="KW-0406">Ion transport</keyword>
<keyword id="KW-0446">Lipid-binding</keyword>
<keyword id="KW-0472">Membrane</keyword>
<keyword id="KW-0812">Transmembrane</keyword>
<keyword id="KW-1133">Transmembrane helix</keyword>
<keyword id="KW-0813">Transport</keyword>
<dbReference type="EMBL" id="CP000472">
    <property type="protein sequence ID" value="ACJ31776.1"/>
    <property type="molecule type" value="Genomic_DNA"/>
</dbReference>
<dbReference type="RefSeq" id="WP_011639455.1">
    <property type="nucleotide sequence ID" value="NC_011566.1"/>
</dbReference>
<dbReference type="SMR" id="B8CVV0"/>
<dbReference type="STRING" id="225849.swp_5161"/>
<dbReference type="GeneID" id="90572057"/>
<dbReference type="KEGG" id="swp:swp_5161"/>
<dbReference type="eggNOG" id="ENOG5032S3K">
    <property type="taxonomic scope" value="Bacteria"/>
</dbReference>
<dbReference type="HOGENOM" id="CLU_148047_1_0_6"/>
<dbReference type="OrthoDB" id="9811659at2"/>
<dbReference type="Proteomes" id="UP000000753">
    <property type="component" value="Chromosome"/>
</dbReference>
<dbReference type="GO" id="GO:0005886">
    <property type="term" value="C:plasma membrane"/>
    <property type="evidence" value="ECO:0007669"/>
    <property type="project" value="UniProtKB-SubCell"/>
</dbReference>
<dbReference type="GO" id="GO:0045259">
    <property type="term" value="C:proton-transporting ATP synthase complex"/>
    <property type="evidence" value="ECO:0007669"/>
    <property type="project" value="UniProtKB-KW"/>
</dbReference>
<dbReference type="GO" id="GO:0033177">
    <property type="term" value="C:proton-transporting two-sector ATPase complex, proton-transporting domain"/>
    <property type="evidence" value="ECO:0007669"/>
    <property type="project" value="InterPro"/>
</dbReference>
<dbReference type="GO" id="GO:0008289">
    <property type="term" value="F:lipid binding"/>
    <property type="evidence" value="ECO:0007669"/>
    <property type="project" value="UniProtKB-KW"/>
</dbReference>
<dbReference type="GO" id="GO:0046933">
    <property type="term" value="F:proton-transporting ATP synthase activity, rotational mechanism"/>
    <property type="evidence" value="ECO:0007669"/>
    <property type="project" value="UniProtKB-UniRule"/>
</dbReference>
<dbReference type="CDD" id="cd18185">
    <property type="entry name" value="ATP-synt_Fo_c_ATPE"/>
    <property type="match status" value="1"/>
</dbReference>
<dbReference type="FunFam" id="1.20.20.10:FF:000002">
    <property type="entry name" value="ATP synthase subunit c"/>
    <property type="match status" value="1"/>
</dbReference>
<dbReference type="Gene3D" id="1.20.20.10">
    <property type="entry name" value="F1F0 ATP synthase subunit C"/>
    <property type="match status" value="1"/>
</dbReference>
<dbReference type="HAMAP" id="MF_01396">
    <property type="entry name" value="ATP_synth_c_bact"/>
    <property type="match status" value="1"/>
</dbReference>
<dbReference type="InterPro" id="IPR005953">
    <property type="entry name" value="ATP_synth_csu_bac/chlpt"/>
</dbReference>
<dbReference type="InterPro" id="IPR000454">
    <property type="entry name" value="ATP_synth_F0_csu"/>
</dbReference>
<dbReference type="InterPro" id="IPR020537">
    <property type="entry name" value="ATP_synth_F0_csu_DDCD_BS"/>
</dbReference>
<dbReference type="InterPro" id="IPR038662">
    <property type="entry name" value="ATP_synth_F0_csu_sf"/>
</dbReference>
<dbReference type="InterPro" id="IPR002379">
    <property type="entry name" value="ATPase_proteolipid_c-like_dom"/>
</dbReference>
<dbReference type="InterPro" id="IPR035921">
    <property type="entry name" value="F/V-ATP_Csub_sf"/>
</dbReference>
<dbReference type="NCBIfam" id="TIGR01260">
    <property type="entry name" value="ATP_synt_c"/>
    <property type="match status" value="1"/>
</dbReference>
<dbReference type="NCBIfam" id="NF005363">
    <property type="entry name" value="PRK06876.1"/>
    <property type="match status" value="1"/>
</dbReference>
<dbReference type="Pfam" id="PF00137">
    <property type="entry name" value="ATP-synt_C"/>
    <property type="match status" value="1"/>
</dbReference>
<dbReference type="PRINTS" id="PR00124">
    <property type="entry name" value="ATPASEC"/>
</dbReference>
<dbReference type="SUPFAM" id="SSF81333">
    <property type="entry name" value="F1F0 ATP synthase subunit C"/>
    <property type="match status" value="1"/>
</dbReference>
<dbReference type="PROSITE" id="PS00605">
    <property type="entry name" value="ATPASE_C"/>
    <property type="match status" value="1"/>
</dbReference>
<evidence type="ECO:0000255" key="1">
    <source>
        <dbReference type="HAMAP-Rule" id="MF_01396"/>
    </source>
</evidence>
<comment type="function">
    <text evidence="1">F(1)F(0) ATP synthase produces ATP from ADP in the presence of a proton or sodium gradient. F-type ATPases consist of two structural domains, F(1) containing the extramembraneous catalytic core and F(0) containing the membrane proton channel, linked together by a central stalk and a peripheral stalk. During catalysis, ATP synthesis in the catalytic domain of F(1) is coupled via a rotary mechanism of the central stalk subunits to proton translocation.</text>
</comment>
<comment type="function">
    <text evidence="1">Key component of the F(0) channel; it plays a direct role in translocation across the membrane. A homomeric c-ring of between 10-14 subunits forms the central stalk rotor element with the F(1) delta and epsilon subunits.</text>
</comment>
<comment type="subunit">
    <text evidence="1">F-type ATPases have 2 components, F(1) - the catalytic core - and F(0) - the membrane proton channel. F(1) has five subunits: alpha(3), beta(3), gamma(1), delta(1), epsilon(1). F(0) has three main subunits: a(1), b(2) and c(10-14). The alpha and beta chains form an alternating ring which encloses part of the gamma chain. F(1) is attached to F(0) by a central stalk formed by the gamma and epsilon chains, while a peripheral stalk is formed by the delta and b chains.</text>
</comment>
<comment type="subcellular location">
    <subcellularLocation>
        <location evidence="1">Cell inner membrane</location>
        <topology evidence="1">Multi-pass membrane protein</topology>
    </subcellularLocation>
</comment>
<comment type="similarity">
    <text evidence="1">Belongs to the ATPase C chain family.</text>
</comment>
<accession>B8CVV0</accession>